<dbReference type="EMBL" id="AP009384">
    <property type="protein sequence ID" value="BAF86907.1"/>
    <property type="molecule type" value="Genomic_DNA"/>
</dbReference>
<dbReference type="RefSeq" id="WP_012169440.1">
    <property type="nucleotide sequence ID" value="NC_009937.1"/>
</dbReference>
<dbReference type="SMR" id="A8HU57"/>
<dbReference type="STRING" id="438753.AZC_0909"/>
<dbReference type="KEGG" id="azc:AZC_0909"/>
<dbReference type="eggNOG" id="COG1742">
    <property type="taxonomic scope" value="Bacteria"/>
</dbReference>
<dbReference type="HOGENOM" id="CLU_117653_1_0_5"/>
<dbReference type="Proteomes" id="UP000000270">
    <property type="component" value="Chromosome"/>
</dbReference>
<dbReference type="GO" id="GO:0005886">
    <property type="term" value="C:plasma membrane"/>
    <property type="evidence" value="ECO:0007669"/>
    <property type="project" value="UniProtKB-SubCell"/>
</dbReference>
<dbReference type="HAMAP" id="MF_00010">
    <property type="entry name" value="UPF0060"/>
    <property type="match status" value="1"/>
</dbReference>
<dbReference type="InterPro" id="IPR003844">
    <property type="entry name" value="UPF0060"/>
</dbReference>
<dbReference type="NCBIfam" id="NF002586">
    <property type="entry name" value="PRK02237.1"/>
    <property type="match status" value="1"/>
</dbReference>
<dbReference type="PANTHER" id="PTHR36116">
    <property type="entry name" value="UPF0060 MEMBRANE PROTEIN YNFA"/>
    <property type="match status" value="1"/>
</dbReference>
<dbReference type="PANTHER" id="PTHR36116:SF1">
    <property type="entry name" value="UPF0060 MEMBRANE PROTEIN YNFA"/>
    <property type="match status" value="1"/>
</dbReference>
<dbReference type="Pfam" id="PF02694">
    <property type="entry name" value="UPF0060"/>
    <property type="match status" value="1"/>
</dbReference>
<dbReference type="SUPFAM" id="SSF103481">
    <property type="entry name" value="Multidrug resistance efflux transporter EmrE"/>
    <property type="match status" value="1"/>
</dbReference>
<keyword id="KW-0997">Cell inner membrane</keyword>
<keyword id="KW-1003">Cell membrane</keyword>
<keyword id="KW-0472">Membrane</keyword>
<keyword id="KW-1185">Reference proteome</keyword>
<keyword id="KW-0812">Transmembrane</keyword>
<keyword id="KW-1133">Transmembrane helix</keyword>
<organism>
    <name type="scientific">Azorhizobium caulinodans (strain ATCC 43989 / DSM 5975 / JCM 20966 / LMG 6465 / NBRC 14845 / NCIMB 13405 / ORS 571)</name>
    <dbReference type="NCBI Taxonomy" id="438753"/>
    <lineage>
        <taxon>Bacteria</taxon>
        <taxon>Pseudomonadati</taxon>
        <taxon>Pseudomonadota</taxon>
        <taxon>Alphaproteobacteria</taxon>
        <taxon>Hyphomicrobiales</taxon>
        <taxon>Xanthobacteraceae</taxon>
        <taxon>Azorhizobium</taxon>
    </lineage>
</organism>
<sequence>MSLPLFALAALAEIAGCFAFWHVVRAGGSPLWLAPGVLSLVAFAALLTQVEADAAGRAFAAYGGIYILASLGWMWAAEGVRPDRFDALGAAICLAGACVILFAPRG</sequence>
<evidence type="ECO:0000255" key="1">
    <source>
        <dbReference type="HAMAP-Rule" id="MF_00010"/>
    </source>
</evidence>
<comment type="subcellular location">
    <subcellularLocation>
        <location evidence="1">Cell inner membrane</location>
        <topology evidence="1">Multi-pass membrane protein</topology>
    </subcellularLocation>
</comment>
<comment type="similarity">
    <text evidence="1">Belongs to the UPF0060 family.</text>
</comment>
<reference key="1">
    <citation type="submission" date="2007-04" db="EMBL/GenBank/DDBJ databases">
        <title>Complete genome sequence of the nitrogen-fixing bacterium Azorhizobium caulinodans ORS571.</title>
        <authorList>
            <person name="Lee K.B."/>
            <person name="Backer P.D."/>
            <person name="Aono T."/>
            <person name="Liu C.T."/>
            <person name="Suzuki S."/>
            <person name="Suzuki T."/>
            <person name="Kaneko T."/>
            <person name="Yamada M."/>
            <person name="Tabata S."/>
            <person name="Kupfer D.M."/>
            <person name="Najar F.Z."/>
            <person name="Wiley G.B."/>
            <person name="Roe B."/>
            <person name="Binnewies T."/>
            <person name="Ussery D."/>
            <person name="Vereecke D."/>
            <person name="Gevers D."/>
            <person name="Holsters M."/>
            <person name="Oyaizu H."/>
        </authorList>
    </citation>
    <scope>NUCLEOTIDE SEQUENCE [LARGE SCALE GENOMIC DNA]</scope>
    <source>
        <strain>ATCC 43989 / DSM 5975 / JCM 20966 / LMG 6465 / NBRC 14845 / NCIMB 13405 / ORS 571</strain>
    </source>
</reference>
<feature type="chain" id="PRO_0000321578" description="UPF0060 membrane protein AZC_0909">
    <location>
        <begin position="1"/>
        <end position="106"/>
    </location>
</feature>
<feature type="transmembrane region" description="Helical" evidence="1">
    <location>
        <begin position="4"/>
        <end position="24"/>
    </location>
</feature>
<feature type="transmembrane region" description="Helical" evidence="1">
    <location>
        <begin position="27"/>
        <end position="47"/>
    </location>
</feature>
<feature type="transmembrane region" description="Helical" evidence="1">
    <location>
        <begin position="58"/>
        <end position="78"/>
    </location>
</feature>
<feature type="transmembrane region" description="Helical" evidence="1">
    <location>
        <begin position="84"/>
        <end position="104"/>
    </location>
</feature>
<protein>
    <recommendedName>
        <fullName evidence="1">UPF0060 membrane protein AZC_0909</fullName>
    </recommendedName>
</protein>
<proteinExistence type="inferred from homology"/>
<gene>
    <name type="ordered locus">AZC_0909</name>
</gene>
<accession>A8HU57</accession>
<name>Y909_AZOC5</name>